<protein>
    <recommendedName>
        <fullName>N-acyl-aromatic-L-amino acid amidohydrolase (carboxylate-forming)</fullName>
        <ecNumber>3.5.1.114</ecNumber>
    </recommendedName>
    <alternativeName>
        <fullName>Acylase III</fullName>
    </alternativeName>
    <alternativeName>
        <fullName>Aminoacylase-3</fullName>
        <shortName>ACY-3</shortName>
    </alternativeName>
    <alternativeName>
        <fullName>Aspartoacylase-2</fullName>
    </alternativeName>
    <alternativeName>
        <fullName>Hepatitis C virus core-binding protein 1</fullName>
        <shortName>HCBP1</shortName>
        <shortName>HCV core-binding protein 1</shortName>
    </alternativeName>
</protein>
<feature type="chain" id="PRO_0000216875" description="N-acyl-aromatic-L-amino acid amidohydrolase (carboxylate-forming)">
    <location>
        <begin position="1"/>
        <end position="319"/>
    </location>
</feature>
<feature type="region of interest" description="Hydrolytic domain" evidence="1">
    <location>
        <begin position="1"/>
        <end position="210"/>
    </location>
</feature>
<feature type="region of interest" description="Shielding domain" evidence="1">
    <location>
        <begin position="211"/>
        <end position="318"/>
    </location>
</feature>
<feature type="binding site" evidence="1">
    <location>
        <position position="21"/>
    </location>
    <ligand>
        <name>Zn(2+)</name>
        <dbReference type="ChEBI" id="CHEBI:29105"/>
    </ligand>
</feature>
<feature type="binding site" evidence="1">
    <location>
        <position position="24"/>
    </location>
    <ligand>
        <name>Zn(2+)</name>
        <dbReference type="ChEBI" id="CHEBI:29105"/>
    </ligand>
</feature>
<feature type="binding site" evidence="1">
    <location>
        <position position="63"/>
    </location>
    <ligand>
        <name>substrate</name>
    </ligand>
</feature>
<feature type="binding site" evidence="1">
    <location>
        <begin position="70"/>
        <end position="71"/>
    </location>
    <ligand>
        <name>substrate</name>
    </ligand>
</feature>
<feature type="binding site" evidence="1">
    <location>
        <position position="116"/>
    </location>
    <ligand>
        <name>Zn(2+)</name>
        <dbReference type="ChEBI" id="CHEBI:29105"/>
    </ligand>
</feature>
<feature type="binding site" evidence="1">
    <location>
        <position position="178"/>
    </location>
    <ligand>
        <name>substrate</name>
    </ligand>
</feature>
<feature type="binding site" evidence="1">
    <location>
        <position position="288"/>
    </location>
    <ligand>
        <name>substrate</name>
    </ligand>
</feature>
<feature type="sequence variant" id="VAR_048341" description="In dbSNP:rs948445.">
    <original>R</original>
    <variation>Q</variation>
    <location>
        <position position="8"/>
    </location>
</feature>
<feature type="sequence variant" id="VAR_048342" description="In dbSNP:rs2290959.">
    <original>V</original>
    <variation>M</variation>
    <location>
        <position position="281"/>
    </location>
</feature>
<reference key="1">
    <citation type="submission" date="2001-06" db="EMBL/GenBank/DDBJ databases">
        <title>Identification of a novel aspartoacylase homolog (ACY-3) in human and mouse kidneys.</title>
        <authorList>
            <person name="Huang C.-H."/>
            <person name="Chen H."/>
            <person name="Peng J."/>
            <person name="Chen Y."/>
        </authorList>
    </citation>
    <scope>NUCLEOTIDE SEQUENCE [MRNA]</scope>
</reference>
<reference key="2">
    <citation type="submission" date="2002-10" db="EMBL/GenBank/DDBJ databases">
        <authorList>
            <person name="Pushkin A."/>
            <person name="Carpenito G."/>
            <person name="Abuladze N."/>
            <person name="Newman D."/>
            <person name="Kurtz I."/>
        </authorList>
    </citation>
    <scope>NUCLEOTIDE SEQUENCE [MRNA]</scope>
</reference>
<reference key="3">
    <citation type="journal article" date="2004" name="Genome Res.">
        <title>The status, quality, and expansion of the NIH full-length cDNA project: the Mammalian Gene Collection (MGC).</title>
        <authorList>
            <consortium name="The MGC Project Team"/>
        </authorList>
    </citation>
    <scope>NUCLEOTIDE SEQUENCE [LARGE SCALE MRNA]</scope>
    <source>
        <tissue>Colon</tissue>
    </source>
</reference>
<reference key="4">
    <citation type="journal article" date="2009" name="J. Gastroenterol. Hepatol.">
        <title>Identification of a novel protein binding to hepatitis C virus core protein.</title>
        <authorList>
            <person name="Chen Y.R."/>
            <person name="Chen T.Y."/>
            <person name="Zhang S.L."/>
            <person name="Lin S.M."/>
            <person name="Zhao Y.R."/>
            <person name="Ye F."/>
            <person name="Zhang X."/>
            <person name="Shi L."/>
            <person name="Dang S.S."/>
            <person name="Liu M."/>
        </authorList>
    </citation>
    <scope>INTERACTION WITH HCV CORE PROTEIN (MICROBIAL INFECTION)</scope>
    <scope>SUBCELLULAR LOCATION</scope>
</reference>
<reference key="5">
    <citation type="journal article" date="2014" name="J. Proteomics">
        <title>An enzyme assisted RP-RPLC approach for in-depth analysis of human liver phosphoproteome.</title>
        <authorList>
            <person name="Bian Y."/>
            <person name="Song C."/>
            <person name="Cheng K."/>
            <person name="Dong M."/>
            <person name="Wang F."/>
            <person name="Huang J."/>
            <person name="Sun D."/>
            <person name="Wang L."/>
            <person name="Ye M."/>
            <person name="Zou H."/>
        </authorList>
    </citation>
    <scope>IDENTIFICATION BY MASS SPECTROMETRY [LARGE SCALE ANALYSIS]</scope>
    <source>
        <tissue>Liver</tissue>
    </source>
</reference>
<name>ACY3_HUMAN</name>
<organism>
    <name type="scientific">Homo sapiens</name>
    <name type="common">Human</name>
    <dbReference type="NCBI Taxonomy" id="9606"/>
    <lineage>
        <taxon>Eukaryota</taxon>
        <taxon>Metazoa</taxon>
        <taxon>Chordata</taxon>
        <taxon>Craniata</taxon>
        <taxon>Vertebrata</taxon>
        <taxon>Euteleostomi</taxon>
        <taxon>Mammalia</taxon>
        <taxon>Eutheria</taxon>
        <taxon>Euarchontoglires</taxon>
        <taxon>Primates</taxon>
        <taxon>Haplorrhini</taxon>
        <taxon>Catarrhini</taxon>
        <taxon>Hominidae</taxon>
        <taxon>Homo</taxon>
    </lineage>
</organism>
<proteinExistence type="evidence at protein level"/>
<keyword id="KW-1003">Cell membrane</keyword>
<keyword id="KW-0963">Cytoplasm</keyword>
<keyword id="KW-0945">Host-virus interaction</keyword>
<keyword id="KW-0378">Hydrolase</keyword>
<keyword id="KW-0472">Membrane</keyword>
<keyword id="KW-0479">Metal-binding</keyword>
<keyword id="KW-1267">Proteomics identification</keyword>
<keyword id="KW-1185">Reference proteome</keyword>
<keyword id="KW-0862">Zinc</keyword>
<gene>
    <name type="primary">ACY3</name>
    <name type="synonym">ASPA2</name>
</gene>
<sequence length="319" mass="35241">MCSLPVPREPLRRVAVTGGTHGNEMSGVYLARHWLHAPAELQRASFSAVPVLANPAATSGCRRYVDHDLNRTFTSSFLNSRPTPDDPYEVTRARELNQLLGPKASGQAFDFVLDLHNTTANMGTCLIAKSSHEVFAMHLCRHLQLQYPELSCQVFLYQRSGEESYNLDSVAKNGLGLELGPQPQGVLRADIFSRMRTLVATVLDFIELFNQGTAFPAFEMEAYRPVGVVDFPRTEAGHLAGTVHPQLQDRDFQPLQPGAPIFQMFSGEDLLYEGESTVYPVFINEAAYYEKGVAFVQTEKFTFTVPAMPALTPAPSPAS</sequence>
<accession>Q96HD9</accession>
<dbReference type="EC" id="3.5.1.114"/>
<dbReference type="EMBL" id="AY040761">
    <property type="protein sequence ID" value="AAK94770.1"/>
    <property type="molecule type" value="mRNA"/>
</dbReference>
<dbReference type="EMBL" id="AY169233">
    <property type="protein sequence ID" value="AAN87896.1"/>
    <property type="molecule type" value="mRNA"/>
</dbReference>
<dbReference type="EMBL" id="BC008689">
    <property type="protein sequence ID" value="AAH08689.1"/>
    <property type="molecule type" value="mRNA"/>
</dbReference>
<dbReference type="CCDS" id="CCDS8175.1"/>
<dbReference type="RefSeq" id="NP_542389.1">
    <property type="nucleotide sequence ID" value="NM_080658.2"/>
</dbReference>
<dbReference type="SMR" id="Q96HD9"/>
<dbReference type="BioGRID" id="124869">
    <property type="interactions" value="28"/>
</dbReference>
<dbReference type="FunCoup" id="Q96HD9">
    <property type="interactions" value="21"/>
</dbReference>
<dbReference type="IntAct" id="Q96HD9">
    <property type="interactions" value="25"/>
</dbReference>
<dbReference type="MINT" id="Q96HD9"/>
<dbReference type="STRING" id="9606.ENSP00000255082"/>
<dbReference type="iPTMnet" id="Q96HD9"/>
<dbReference type="PhosphoSitePlus" id="Q96HD9"/>
<dbReference type="BioMuta" id="ACY3"/>
<dbReference type="DMDM" id="34395507"/>
<dbReference type="jPOST" id="Q96HD9"/>
<dbReference type="MassIVE" id="Q96HD9"/>
<dbReference type="PaxDb" id="9606-ENSP00000255082"/>
<dbReference type="PeptideAtlas" id="Q96HD9"/>
<dbReference type="ProteomicsDB" id="76736"/>
<dbReference type="Antibodypedia" id="30490">
    <property type="antibodies" value="302 antibodies from 25 providers"/>
</dbReference>
<dbReference type="DNASU" id="91703"/>
<dbReference type="Ensembl" id="ENST00000255082.8">
    <property type="protein sequence ID" value="ENSP00000255082.3"/>
    <property type="gene ID" value="ENSG00000132744.8"/>
</dbReference>
<dbReference type="GeneID" id="91703"/>
<dbReference type="KEGG" id="hsa:91703"/>
<dbReference type="MANE-Select" id="ENST00000255082.8">
    <property type="protein sequence ID" value="ENSP00000255082.3"/>
    <property type="RefSeq nucleotide sequence ID" value="NM_080658.2"/>
    <property type="RefSeq protein sequence ID" value="NP_542389.1"/>
</dbReference>
<dbReference type="UCSC" id="uc001omq.3">
    <property type="organism name" value="human"/>
</dbReference>
<dbReference type="AGR" id="HGNC:24104"/>
<dbReference type="CTD" id="91703"/>
<dbReference type="DisGeNET" id="91703"/>
<dbReference type="GeneCards" id="ACY3"/>
<dbReference type="HGNC" id="HGNC:24104">
    <property type="gene designation" value="ACY3"/>
</dbReference>
<dbReference type="HPA" id="ENSG00000132744">
    <property type="expression patterns" value="Group enriched (intestine, kidney, liver, pancreas)"/>
</dbReference>
<dbReference type="MIM" id="614413">
    <property type="type" value="gene"/>
</dbReference>
<dbReference type="neXtProt" id="NX_Q96HD9"/>
<dbReference type="OpenTargets" id="ENSG00000132744"/>
<dbReference type="PharmGKB" id="PA134936640"/>
<dbReference type="VEuPathDB" id="HostDB:ENSG00000132744"/>
<dbReference type="eggNOG" id="ENOG502QRAK">
    <property type="taxonomic scope" value="Eukaryota"/>
</dbReference>
<dbReference type="GeneTree" id="ENSGT00390000001189"/>
<dbReference type="HOGENOM" id="CLU_083292_0_0_1"/>
<dbReference type="InParanoid" id="Q96HD9"/>
<dbReference type="OMA" id="AMHLCHH"/>
<dbReference type="OrthoDB" id="8300214at2759"/>
<dbReference type="PAN-GO" id="Q96HD9">
    <property type="GO annotations" value="2 GO annotations based on evolutionary models"/>
</dbReference>
<dbReference type="PhylomeDB" id="Q96HD9"/>
<dbReference type="TreeFam" id="TF328708"/>
<dbReference type="BioCyc" id="MetaCyc:HS13441-MONOMER"/>
<dbReference type="BRENDA" id="3.5.1.114">
    <property type="organism ID" value="2681"/>
</dbReference>
<dbReference type="PathwayCommons" id="Q96HD9"/>
<dbReference type="Reactome" id="R-HSA-5423646">
    <property type="pathway name" value="Aflatoxin activation and detoxification"/>
</dbReference>
<dbReference type="SignaLink" id="Q96HD9"/>
<dbReference type="BioGRID-ORCS" id="91703">
    <property type="hits" value="27 hits in 1154 CRISPR screens"/>
</dbReference>
<dbReference type="GenomeRNAi" id="91703"/>
<dbReference type="Pharos" id="Q96HD9">
    <property type="development level" value="Tbio"/>
</dbReference>
<dbReference type="PRO" id="PR:Q96HD9"/>
<dbReference type="Proteomes" id="UP000005640">
    <property type="component" value="Chromosome 11"/>
</dbReference>
<dbReference type="RNAct" id="Q96HD9">
    <property type="molecule type" value="protein"/>
</dbReference>
<dbReference type="Bgee" id="ENSG00000132744">
    <property type="expression patterns" value="Expressed in ileal mucosa and 120 other cell types or tissues"/>
</dbReference>
<dbReference type="ExpressionAtlas" id="Q96HD9">
    <property type="expression patterns" value="baseline and differential"/>
</dbReference>
<dbReference type="GO" id="GO:0016324">
    <property type="term" value="C:apical plasma membrane"/>
    <property type="evidence" value="ECO:0007669"/>
    <property type="project" value="UniProtKB-SubCell"/>
</dbReference>
<dbReference type="GO" id="GO:0005829">
    <property type="term" value="C:cytosol"/>
    <property type="evidence" value="ECO:0000318"/>
    <property type="project" value="GO_Central"/>
</dbReference>
<dbReference type="GO" id="GO:0070062">
    <property type="term" value="C:extracellular exosome"/>
    <property type="evidence" value="ECO:0007005"/>
    <property type="project" value="UniProtKB"/>
</dbReference>
<dbReference type="GO" id="GO:0004046">
    <property type="term" value="F:aminoacylase activity"/>
    <property type="evidence" value="ECO:0000250"/>
    <property type="project" value="UniProtKB"/>
</dbReference>
<dbReference type="GO" id="GO:0016788">
    <property type="term" value="F:hydrolase activity, acting on ester bonds"/>
    <property type="evidence" value="ECO:0007669"/>
    <property type="project" value="InterPro"/>
</dbReference>
<dbReference type="GO" id="GO:0042802">
    <property type="term" value="F:identical protein binding"/>
    <property type="evidence" value="ECO:0007669"/>
    <property type="project" value="Ensembl"/>
</dbReference>
<dbReference type="GO" id="GO:0046872">
    <property type="term" value="F:metal ion binding"/>
    <property type="evidence" value="ECO:0007669"/>
    <property type="project" value="UniProtKB-KW"/>
</dbReference>
<dbReference type="CDD" id="cd06909">
    <property type="entry name" value="M14_ASPA"/>
    <property type="match status" value="1"/>
</dbReference>
<dbReference type="FunFam" id="2.20.25.160:FF:000001">
    <property type="entry name" value="Aspartoacylase"/>
    <property type="match status" value="1"/>
</dbReference>
<dbReference type="FunFam" id="3.40.630.10:FF:000025">
    <property type="entry name" value="aspartoacylase"/>
    <property type="match status" value="1"/>
</dbReference>
<dbReference type="Gene3D" id="2.20.25.160">
    <property type="match status" value="1"/>
</dbReference>
<dbReference type="Gene3D" id="3.40.630.10">
    <property type="entry name" value="Zn peptidases"/>
    <property type="match status" value="1"/>
</dbReference>
<dbReference type="HAMAP" id="MF_00704">
    <property type="entry name" value="Aspartoacylase"/>
    <property type="match status" value="1"/>
</dbReference>
<dbReference type="InterPro" id="IPR050178">
    <property type="entry name" value="AspA/AstE_fam"/>
</dbReference>
<dbReference type="InterPro" id="IPR016708">
    <property type="entry name" value="Aspartoacylase"/>
</dbReference>
<dbReference type="InterPro" id="IPR055438">
    <property type="entry name" value="AstE_AspA_cat"/>
</dbReference>
<dbReference type="InterPro" id="IPR007036">
    <property type="entry name" value="Aste_AspA_hybrid_dom"/>
</dbReference>
<dbReference type="NCBIfam" id="NF002601">
    <property type="entry name" value="PRK02259.1"/>
    <property type="match status" value="1"/>
</dbReference>
<dbReference type="PANTHER" id="PTHR15162">
    <property type="entry name" value="ASPARTOACYLASE"/>
    <property type="match status" value="1"/>
</dbReference>
<dbReference type="PANTHER" id="PTHR15162:SF5">
    <property type="entry name" value="N-ACYL-AROMATIC-L-AMINO ACID AMIDOHYDROLASE (CARBOXYLATE-FORMING)"/>
    <property type="match status" value="1"/>
</dbReference>
<dbReference type="Pfam" id="PF24827">
    <property type="entry name" value="AstE_AspA_cat"/>
    <property type="match status" value="1"/>
</dbReference>
<dbReference type="Pfam" id="PF04952">
    <property type="entry name" value="AstE_AspA_hybrid"/>
    <property type="match status" value="1"/>
</dbReference>
<dbReference type="PIRSF" id="PIRSF018001">
    <property type="entry name" value="Aspartoacylase"/>
    <property type="match status" value="1"/>
</dbReference>
<dbReference type="SUPFAM" id="SSF53187">
    <property type="entry name" value="Zn-dependent exopeptidases"/>
    <property type="match status" value="1"/>
</dbReference>
<evidence type="ECO:0000250" key="1"/>
<evidence type="ECO:0000250" key="2">
    <source>
        <dbReference type="UniProtKB" id="Q91XE4"/>
    </source>
</evidence>
<evidence type="ECO:0000269" key="3">
    <source>
    </source>
</evidence>
<evidence type="ECO:0000305" key="4"/>
<comment type="function">
    <text evidence="1">Plays an important role in deacetylating mercapturic acids in kidney proximal tubules. Also acts on N-acetyl-aromatic amino acids (By similarity).</text>
</comment>
<comment type="catalytic activity">
    <reaction>
        <text>an N-acyl-aromatic L-alpha-amino acid + H2O = an aromatic L-alpha-amino acid + a carboxylate</text>
        <dbReference type="Rhea" id="RHEA:54184"/>
        <dbReference type="ChEBI" id="CHEBI:15377"/>
        <dbReference type="ChEBI" id="CHEBI:29067"/>
        <dbReference type="ChEBI" id="CHEBI:84824"/>
        <dbReference type="ChEBI" id="CHEBI:138093"/>
        <dbReference type="EC" id="3.5.1.114"/>
    </reaction>
</comment>
<comment type="catalytic activity">
    <reaction>
        <text>an N-acetyl-L-cysteine-S-conjugate + H2O = an S-substituted L-cysteine + acetate</text>
        <dbReference type="Rhea" id="RHEA:36855"/>
        <dbReference type="ChEBI" id="CHEBI:15377"/>
        <dbReference type="ChEBI" id="CHEBI:30089"/>
        <dbReference type="ChEBI" id="CHEBI:58717"/>
        <dbReference type="ChEBI" id="CHEBI:58718"/>
        <dbReference type="EC" id="3.5.1.114"/>
    </reaction>
</comment>
<comment type="cofactor">
    <cofactor evidence="1">
        <name>Zn(2+)</name>
        <dbReference type="ChEBI" id="CHEBI:29105"/>
    </cofactor>
    <text evidence="1">Binds 1 zinc ion per subunit.</text>
</comment>
<comment type="subunit">
    <text evidence="2">Exists as a mixture of homodimers and homotetramer, both catalytically active.</text>
</comment>
<comment type="subunit">
    <text evidence="3">(Microbial infection) Interacts with hepatitis C virus/HCV core protein.</text>
</comment>
<comment type="interaction">
    <interactant intactId="EBI-3916242">
        <id>Q96HD9</id>
    </interactant>
    <interactant intactId="EBI-10308705">
        <id>Q9H7C9</id>
        <label>AAMDC</label>
    </interactant>
    <organismsDiffer>false</organismsDiffer>
    <experiments>3</experiments>
</comment>
<comment type="interaction">
    <interactant intactId="EBI-3916242">
        <id>Q96HD9</id>
    </interactant>
    <interactant intactId="EBI-4289908">
        <id>P84085</id>
        <label>ARF5</label>
    </interactant>
    <organismsDiffer>false</organismsDiffer>
    <experiments>3</experiments>
</comment>
<comment type="interaction">
    <interactant intactId="EBI-3916242">
        <id>Q96HD9</id>
    </interactant>
    <interactant intactId="EBI-750475">
        <id>P45381</id>
        <label>ASPA</label>
    </interactant>
    <organismsDiffer>false</organismsDiffer>
    <experiments>15</experiments>
</comment>
<comment type="interaction">
    <interactant intactId="EBI-3916242">
        <id>Q96HD9</id>
    </interactant>
    <interactant intactId="EBI-3867333">
        <id>A8MQ03</id>
        <label>CYSRT1</label>
    </interactant>
    <organismsDiffer>false</organismsDiffer>
    <experiments>3</experiments>
</comment>
<comment type="interaction">
    <interactant intactId="EBI-3916242">
        <id>Q96HD9</id>
    </interactant>
    <interactant intactId="EBI-742054">
        <id>Q96D03</id>
        <label>DDIT4L</label>
    </interactant>
    <organismsDiffer>false</organismsDiffer>
    <experiments>5</experiments>
</comment>
<comment type="interaction">
    <interactant intactId="EBI-3916242">
        <id>Q96HD9</id>
    </interactant>
    <interactant intactId="EBI-739467">
        <id>Q9H8Y8</id>
        <label>GORASP2</label>
    </interactant>
    <organismsDiffer>false</organismsDiffer>
    <experiments>15</experiments>
</comment>
<comment type="interaction">
    <interactant intactId="EBI-3916242">
        <id>Q96HD9</id>
    </interactant>
    <interactant intactId="EBI-6509505">
        <id>Q0VD86</id>
        <label>INCA1</label>
    </interactant>
    <organismsDiffer>false</organismsDiffer>
    <experiments>5</experiments>
</comment>
<comment type="interaction">
    <interactant intactId="EBI-3916242">
        <id>Q96HD9</id>
    </interactant>
    <interactant intactId="EBI-10171774">
        <id>P60410</id>
        <label>KRTAP10-8</label>
    </interactant>
    <organismsDiffer>false</organismsDiffer>
    <experiments>3</experiments>
</comment>
<comment type="interaction">
    <interactant intactId="EBI-3916242">
        <id>Q96HD9</id>
    </interactant>
    <interactant intactId="EBI-11992140">
        <id>Q3LI76</id>
        <label>KRTAP15-1</label>
    </interactant>
    <organismsDiffer>false</organismsDiffer>
    <experiments>3</experiments>
</comment>
<comment type="interaction">
    <interactant intactId="EBI-3916242">
        <id>Q96HD9</id>
    </interactant>
    <interactant intactId="EBI-3957672">
        <id>Q6PEX3</id>
        <label>KRTAP26-1</label>
    </interactant>
    <organismsDiffer>false</organismsDiffer>
    <experiments>3</experiments>
</comment>
<comment type="interaction">
    <interactant intactId="EBI-3916242">
        <id>Q96HD9</id>
    </interactant>
    <interactant intactId="EBI-739832">
        <id>Q8TBB1</id>
        <label>LNX1</label>
    </interactant>
    <organismsDiffer>false</organismsDiffer>
    <experiments>3</experiments>
</comment>
<comment type="interaction">
    <interactant intactId="EBI-3916242">
        <id>Q96HD9</id>
    </interactant>
    <interactant intactId="EBI-945833">
        <id>Q7Z3S9</id>
        <label>NOTCH2NLA</label>
    </interactant>
    <organismsDiffer>false</organismsDiffer>
    <experiments>3</experiments>
</comment>
<comment type="interaction">
    <interactant intactId="EBI-3916242">
        <id>Q96HD9</id>
    </interactant>
    <interactant intactId="EBI-348555">
        <id>O75928</id>
        <label>PIAS2</label>
    </interactant>
    <organismsDiffer>false</organismsDiffer>
    <experiments>3</experiments>
</comment>
<comment type="interaction">
    <interactant intactId="EBI-3916242">
        <id>Q96HD9</id>
    </interactant>
    <interactant intactId="EBI-742388">
        <id>Q9H8W4</id>
        <label>PLEKHF2</label>
    </interactant>
    <organismsDiffer>false</organismsDiffer>
    <experiments>4</experiments>
</comment>
<comment type="interaction">
    <interactant intactId="EBI-3916242">
        <id>Q96HD9</id>
    </interactant>
    <interactant intactId="EBI-10182608">
        <id>O15305</id>
        <label>PMM2</label>
    </interactant>
    <organismsDiffer>false</organismsDiffer>
    <experiments>9</experiments>
</comment>
<comment type="subcellular location">
    <subcellularLocation>
        <location evidence="3">Apical cell membrane</location>
        <topology evidence="3">Peripheral membrane protein</topology>
    </subcellularLocation>
    <subcellularLocation>
        <location evidence="3">Cytoplasm</location>
    </subcellularLocation>
    <text>Predominantly localized in the apical membrane of cells in the S1 segment. In the proximal straight tubules (S2 and S3 segments) is expressed diffusely throughout the cytoplasm.</text>
</comment>
<comment type="similarity">
    <text evidence="4">Belongs to the AspA/AstE family. Aspartoacylase subfamily.</text>
</comment>